<organism evidence="9">
    <name type="scientific">Mus musculus</name>
    <name type="common">Mouse</name>
    <dbReference type="NCBI Taxonomy" id="10090"/>
    <lineage>
        <taxon>Eukaryota</taxon>
        <taxon>Metazoa</taxon>
        <taxon>Chordata</taxon>
        <taxon>Craniata</taxon>
        <taxon>Vertebrata</taxon>
        <taxon>Euteleostomi</taxon>
        <taxon>Mammalia</taxon>
        <taxon>Eutheria</taxon>
        <taxon>Euarchontoglires</taxon>
        <taxon>Glires</taxon>
        <taxon>Rodentia</taxon>
        <taxon>Myomorpha</taxon>
        <taxon>Muroidea</taxon>
        <taxon>Muridae</taxon>
        <taxon>Murinae</taxon>
        <taxon>Mus</taxon>
        <taxon>Mus</taxon>
    </lineage>
</organism>
<accession>Q8C0Q2</accession>
<accession>Q80U14</accession>
<proteinExistence type="evidence at protein level"/>
<sequence>MASKRKSTTPCMIPVKTVVLPGASTEPQPVESLPEGPQQDLPSEAPDASSEAAPNPSSTDGSALANGHRSTLDGYVYCCKECEFRSQDVTHFIGHMNSEHTDFNKDPTFVCTGCSFLAKNPEGLSLHNAKCHSGEASFLWNVTKPDNHVVVEQSVPDSASSSVLAGESTTEGTEIIITKTPIMKIMKGKAEAKKIHMLKENAPNQPGSEALPKPLAGEREVKEGDHTFINGAAPGSQASAKSTKPPPAANGPLIGTVPVLPAGIAQFLSLQQQPPVHAQHHTHQPLPTSKTLPKVMIPLSSIPTYNAAMDSNSFLKNSFHKFPYPTKAELCYLTVVTKYPEEQLKIWFTAQRLKQGISWSPEEIEDARKKMFNTVIQSVPQPTITVLNTPLVASAGNVQHLIQATLPGHAVGQPEGTAGGLLVTQPLMANGLQASSSSLPLTTASVPKPTVAPINTVCSNSASAVKVVNAAQSLLTACPSITSQAFLDANIYKNKKSHEQLSALKGSFCRNQFPGQSEVEHLTKVTGLSTREVRKWFSDRRYHCRNLKGSRAMMPGEHGSVLIDSVPEVPFPLASKVPEVTCIPTATSLVSHPATKRQSWHQTPDFTPTKYKERAPEQLRVLENSFAQNPLPPEEELDRLRSETKMTRREIDGWFSERRKKVNTEETKKADGHMPKEEEEGAEQEGRDEELANELRVPGENGSPEMFLSHALAERKVSPIKINLKNLRVTEASGKSEFPGMGVCEPEEDGLNKLVEQPPSKVSYKKTAQQRHLLRQLFVQTQWPSNQDYDSIMAQTGLPRPEVVRWFGDSRYALKNGQLKWYEDYKRGNFPPGLLVIAPGNRELLQDYYMTHKMLCEEDLQTLCDKTQMSAQQVKQWFAEKMGEETRAVADISSEDQGPRNGEPVAVHKVLGDAYSELSENSESWEPSAPEASSEPFDTSSPQSGRQLEAD</sequence>
<gene>
    <name type="primary">Zhx3</name>
    <name type="synonym">Kiaa0395</name>
    <name evidence="11" type="synonym">Tix1</name>
</gene>
<evidence type="ECO:0000250" key="1"/>
<evidence type="ECO:0000250" key="2">
    <source>
        <dbReference type="UniProtKB" id="Q9H4I2"/>
    </source>
</evidence>
<evidence type="ECO:0000255" key="3"/>
<evidence type="ECO:0000255" key="4">
    <source>
        <dbReference type="PROSITE-ProRule" id="PRU00108"/>
    </source>
</evidence>
<evidence type="ECO:0000256" key="5">
    <source>
        <dbReference type="SAM" id="MobiDB-lite"/>
    </source>
</evidence>
<evidence type="ECO:0000269" key="6">
    <source>
    </source>
</evidence>
<evidence type="ECO:0000305" key="7"/>
<evidence type="ECO:0000312" key="8">
    <source>
        <dbReference type="EMBL" id="AAH58111.1"/>
    </source>
</evidence>
<evidence type="ECO:0000312" key="9">
    <source>
        <dbReference type="EMBL" id="BAC26763.1"/>
    </source>
</evidence>
<evidence type="ECO:0000312" key="10">
    <source>
        <dbReference type="EMBL" id="BAC65553.1"/>
    </source>
</evidence>
<evidence type="ECO:0000312" key="11">
    <source>
        <dbReference type="MGI" id="MGI:2444772"/>
    </source>
</evidence>
<evidence type="ECO:0007744" key="12">
    <source>
    </source>
</evidence>
<evidence type="ECO:0007744" key="13">
    <source>
    </source>
</evidence>
<feature type="chain" id="PRO_0000049396" description="Zinc fingers and homeoboxes protein 3">
    <location>
        <begin position="1"/>
        <end position="951"/>
    </location>
</feature>
<feature type="zinc finger region" description="C2H2-type 1" evidence="3">
    <location>
        <begin position="77"/>
        <end position="100"/>
    </location>
</feature>
<feature type="zinc finger region" description="C2H2-type 2" evidence="3">
    <location>
        <begin position="109"/>
        <end position="132"/>
    </location>
</feature>
<feature type="DNA-binding region" description="Homeobox 1" evidence="4">
    <location>
        <begin position="300"/>
        <end position="359"/>
    </location>
</feature>
<feature type="DNA-binding region" description="Homeobox 2" evidence="4">
    <location>
        <begin position="489"/>
        <end position="548"/>
    </location>
</feature>
<feature type="DNA-binding region" description="Homeobox 3" evidence="4">
    <location>
        <begin position="607"/>
        <end position="666"/>
    </location>
</feature>
<feature type="DNA-binding region" description="Homeobox 4" evidence="4">
    <location>
        <begin position="759"/>
        <end position="818"/>
    </location>
</feature>
<feature type="DNA-binding region" description="Homeobox 5" evidence="4">
    <location>
        <begin position="830"/>
        <end position="889"/>
    </location>
</feature>
<feature type="region of interest" description="Required for nuclear localization" evidence="1">
    <location>
        <begin position="1"/>
        <end position="107"/>
    </location>
</feature>
<feature type="region of interest" description="Disordered" evidence="5">
    <location>
        <begin position="1"/>
        <end position="66"/>
    </location>
</feature>
<feature type="region of interest" description="Disordered" evidence="5">
    <location>
        <begin position="227"/>
        <end position="252"/>
    </location>
</feature>
<feature type="region of interest" description="Required for homodimerization and interaction with NFYA" evidence="1">
    <location>
        <begin position="238"/>
        <end position="483"/>
    </location>
</feature>
<feature type="region of interest" description="Required for repressor activity" evidence="1">
    <location>
        <begin position="299"/>
        <end position="497"/>
    </location>
</feature>
<feature type="region of interest" description="Required for nuclear localization" evidence="1">
    <location>
        <begin position="492"/>
        <end position="550"/>
    </location>
</feature>
<feature type="region of interest" description="Disordered" evidence="5">
    <location>
        <begin position="662"/>
        <end position="690"/>
    </location>
</feature>
<feature type="region of interest" description="Disordered" evidence="5">
    <location>
        <begin position="916"/>
        <end position="951"/>
    </location>
</feature>
<feature type="compositionally biased region" description="Low complexity" evidence="5">
    <location>
        <begin position="42"/>
        <end position="58"/>
    </location>
</feature>
<feature type="compositionally biased region" description="Basic and acidic residues" evidence="5">
    <location>
        <begin position="662"/>
        <end position="676"/>
    </location>
</feature>
<feature type="compositionally biased region" description="Acidic residues" evidence="5">
    <location>
        <begin position="677"/>
        <end position="690"/>
    </location>
</feature>
<feature type="compositionally biased region" description="Low complexity" evidence="5">
    <location>
        <begin position="919"/>
        <end position="936"/>
    </location>
</feature>
<feature type="compositionally biased region" description="Polar residues" evidence="5">
    <location>
        <begin position="937"/>
        <end position="951"/>
    </location>
</feature>
<feature type="modified residue" description="Phosphoserine" evidence="2">
    <location>
        <position position="599"/>
    </location>
</feature>
<feature type="modified residue" description="Phosphoserine" evidence="12 13">
    <location>
        <position position="703"/>
    </location>
</feature>
<feature type="modified residue" description="Phosphoserine" evidence="2">
    <location>
        <position position="718"/>
    </location>
</feature>
<feature type="modified residue" description="Phosphoserine" evidence="2">
    <location>
        <position position="922"/>
    </location>
</feature>
<feature type="modified residue" description="Phosphoserine" evidence="2">
    <location>
        <position position="941"/>
    </location>
</feature>
<feature type="sequence conflict" description="In Ref. 2; BAC26763." evidence="7" ref="2">
    <original>S</original>
    <variation>N</variation>
    <location>
        <position position="763"/>
    </location>
</feature>
<reference evidence="7" key="1">
    <citation type="journal article" date="2003" name="Gene">
        <title>The mouse zinc-fingers and homeoboxes (ZHX) family: ZHX2 forms a heterodimer with ZHX3.</title>
        <authorList>
            <person name="Kawata H."/>
            <person name="Yamada K."/>
            <person name="Shou Z."/>
            <person name="Mizutani T."/>
            <person name="Miyamoto K."/>
        </authorList>
    </citation>
    <scope>NUCLEOTIDE SEQUENCE [GENOMIC DNA / MRNA]</scope>
    <scope>TISSUE SPECIFICITY</scope>
    <source>
        <strain evidence="6">129</strain>
    </source>
</reference>
<reference evidence="7" key="2">
    <citation type="journal article" date="2005" name="Science">
        <title>The transcriptional landscape of the mammalian genome.</title>
        <authorList>
            <person name="Carninci P."/>
            <person name="Kasukawa T."/>
            <person name="Katayama S."/>
            <person name="Gough J."/>
            <person name="Frith M.C."/>
            <person name="Maeda N."/>
            <person name="Oyama R."/>
            <person name="Ravasi T."/>
            <person name="Lenhard B."/>
            <person name="Wells C."/>
            <person name="Kodzius R."/>
            <person name="Shimokawa K."/>
            <person name="Bajic V.B."/>
            <person name="Brenner S.E."/>
            <person name="Batalov S."/>
            <person name="Forrest A.R."/>
            <person name="Zavolan M."/>
            <person name="Davis M.J."/>
            <person name="Wilming L.G."/>
            <person name="Aidinis V."/>
            <person name="Allen J.E."/>
            <person name="Ambesi-Impiombato A."/>
            <person name="Apweiler R."/>
            <person name="Aturaliya R.N."/>
            <person name="Bailey T.L."/>
            <person name="Bansal M."/>
            <person name="Baxter L."/>
            <person name="Beisel K.W."/>
            <person name="Bersano T."/>
            <person name="Bono H."/>
            <person name="Chalk A.M."/>
            <person name="Chiu K.P."/>
            <person name="Choudhary V."/>
            <person name="Christoffels A."/>
            <person name="Clutterbuck D.R."/>
            <person name="Crowe M.L."/>
            <person name="Dalla E."/>
            <person name="Dalrymple B.P."/>
            <person name="de Bono B."/>
            <person name="Della Gatta G."/>
            <person name="di Bernardo D."/>
            <person name="Down T."/>
            <person name="Engstrom P."/>
            <person name="Fagiolini M."/>
            <person name="Faulkner G."/>
            <person name="Fletcher C.F."/>
            <person name="Fukushima T."/>
            <person name="Furuno M."/>
            <person name="Futaki S."/>
            <person name="Gariboldi M."/>
            <person name="Georgii-Hemming P."/>
            <person name="Gingeras T.R."/>
            <person name="Gojobori T."/>
            <person name="Green R.E."/>
            <person name="Gustincich S."/>
            <person name="Harbers M."/>
            <person name="Hayashi Y."/>
            <person name="Hensch T.K."/>
            <person name="Hirokawa N."/>
            <person name="Hill D."/>
            <person name="Huminiecki L."/>
            <person name="Iacono M."/>
            <person name="Ikeo K."/>
            <person name="Iwama A."/>
            <person name="Ishikawa T."/>
            <person name="Jakt M."/>
            <person name="Kanapin A."/>
            <person name="Katoh M."/>
            <person name="Kawasawa Y."/>
            <person name="Kelso J."/>
            <person name="Kitamura H."/>
            <person name="Kitano H."/>
            <person name="Kollias G."/>
            <person name="Krishnan S.P."/>
            <person name="Kruger A."/>
            <person name="Kummerfeld S.K."/>
            <person name="Kurochkin I.V."/>
            <person name="Lareau L.F."/>
            <person name="Lazarevic D."/>
            <person name="Lipovich L."/>
            <person name="Liu J."/>
            <person name="Liuni S."/>
            <person name="McWilliam S."/>
            <person name="Madan Babu M."/>
            <person name="Madera M."/>
            <person name="Marchionni L."/>
            <person name="Matsuda H."/>
            <person name="Matsuzawa S."/>
            <person name="Miki H."/>
            <person name="Mignone F."/>
            <person name="Miyake S."/>
            <person name="Morris K."/>
            <person name="Mottagui-Tabar S."/>
            <person name="Mulder N."/>
            <person name="Nakano N."/>
            <person name="Nakauchi H."/>
            <person name="Ng P."/>
            <person name="Nilsson R."/>
            <person name="Nishiguchi S."/>
            <person name="Nishikawa S."/>
            <person name="Nori F."/>
            <person name="Ohara O."/>
            <person name="Okazaki Y."/>
            <person name="Orlando V."/>
            <person name="Pang K.C."/>
            <person name="Pavan W.J."/>
            <person name="Pavesi G."/>
            <person name="Pesole G."/>
            <person name="Petrovsky N."/>
            <person name="Piazza S."/>
            <person name="Reed J."/>
            <person name="Reid J.F."/>
            <person name="Ring B.Z."/>
            <person name="Ringwald M."/>
            <person name="Rost B."/>
            <person name="Ruan Y."/>
            <person name="Salzberg S.L."/>
            <person name="Sandelin A."/>
            <person name="Schneider C."/>
            <person name="Schoenbach C."/>
            <person name="Sekiguchi K."/>
            <person name="Semple C.A."/>
            <person name="Seno S."/>
            <person name="Sessa L."/>
            <person name="Sheng Y."/>
            <person name="Shibata Y."/>
            <person name="Shimada H."/>
            <person name="Shimada K."/>
            <person name="Silva D."/>
            <person name="Sinclair B."/>
            <person name="Sperling S."/>
            <person name="Stupka E."/>
            <person name="Sugiura K."/>
            <person name="Sultana R."/>
            <person name="Takenaka Y."/>
            <person name="Taki K."/>
            <person name="Tammoja K."/>
            <person name="Tan S.L."/>
            <person name="Tang S."/>
            <person name="Taylor M.S."/>
            <person name="Tegner J."/>
            <person name="Teichmann S.A."/>
            <person name="Ueda H.R."/>
            <person name="van Nimwegen E."/>
            <person name="Verardo R."/>
            <person name="Wei C.L."/>
            <person name="Yagi K."/>
            <person name="Yamanishi H."/>
            <person name="Zabarovsky E."/>
            <person name="Zhu S."/>
            <person name="Zimmer A."/>
            <person name="Hide W."/>
            <person name="Bult C."/>
            <person name="Grimmond S.M."/>
            <person name="Teasdale R.D."/>
            <person name="Liu E.T."/>
            <person name="Brusic V."/>
            <person name="Quackenbush J."/>
            <person name="Wahlestedt C."/>
            <person name="Mattick J.S."/>
            <person name="Hume D.A."/>
            <person name="Kai C."/>
            <person name="Sasaki D."/>
            <person name="Tomaru Y."/>
            <person name="Fukuda S."/>
            <person name="Kanamori-Katayama M."/>
            <person name="Suzuki M."/>
            <person name="Aoki J."/>
            <person name="Arakawa T."/>
            <person name="Iida J."/>
            <person name="Imamura K."/>
            <person name="Itoh M."/>
            <person name="Kato T."/>
            <person name="Kawaji H."/>
            <person name="Kawagashira N."/>
            <person name="Kawashima T."/>
            <person name="Kojima M."/>
            <person name="Kondo S."/>
            <person name="Konno H."/>
            <person name="Nakano K."/>
            <person name="Ninomiya N."/>
            <person name="Nishio T."/>
            <person name="Okada M."/>
            <person name="Plessy C."/>
            <person name="Shibata K."/>
            <person name="Shiraki T."/>
            <person name="Suzuki S."/>
            <person name="Tagami M."/>
            <person name="Waki K."/>
            <person name="Watahiki A."/>
            <person name="Okamura-Oho Y."/>
            <person name="Suzuki H."/>
            <person name="Kawai J."/>
            <person name="Hayashizaki Y."/>
        </authorList>
    </citation>
    <scope>NUCLEOTIDE SEQUENCE [LARGE SCALE MRNA]</scope>
    <source>
        <strain evidence="9">C57BL/6J</strain>
        <tissue evidence="9">Testis</tissue>
    </source>
</reference>
<reference evidence="7" key="3">
    <citation type="journal article" date="2004" name="Genome Res.">
        <title>The status, quality, and expansion of the NIH full-length cDNA project: the Mammalian Gene Collection (MGC).</title>
        <authorList>
            <consortium name="The MGC Project Team"/>
        </authorList>
    </citation>
    <scope>NUCLEOTIDE SEQUENCE [LARGE SCALE MRNA]</scope>
    <source>
        <strain evidence="8">C57BL/6J</strain>
        <tissue evidence="8">Brain</tissue>
    </source>
</reference>
<reference evidence="7" key="4">
    <citation type="journal article" date="2003" name="DNA Res.">
        <title>Prediction of the coding sequences of mouse homologues of KIAA gene: II. The complete nucleotide sequences of 400 mouse KIAA-homologous cDNAs identified by screening of terminal sequences of cDNA clones randomly sampled from size-fractionated libraries.</title>
        <authorList>
            <person name="Okazaki N."/>
            <person name="Kikuno R."/>
            <person name="Ohara R."/>
            <person name="Inamoto S."/>
            <person name="Aizawa H."/>
            <person name="Yuasa S."/>
            <person name="Nakajima D."/>
            <person name="Nagase T."/>
            <person name="Ohara O."/>
            <person name="Koga H."/>
        </authorList>
    </citation>
    <scope>NUCLEOTIDE SEQUENCE [LARGE SCALE MRNA] OF 754-951</scope>
    <source>
        <tissue evidence="10">Brain</tissue>
    </source>
</reference>
<reference key="5">
    <citation type="journal article" date="2007" name="Proc. Natl. Acad. Sci. U.S.A.">
        <title>Large-scale phosphorylation analysis of mouse liver.</title>
        <authorList>
            <person name="Villen J."/>
            <person name="Beausoleil S.A."/>
            <person name="Gerber S.A."/>
            <person name="Gygi S.P."/>
        </authorList>
    </citation>
    <scope>PHOSPHORYLATION [LARGE SCALE ANALYSIS] AT SER-703</scope>
    <scope>IDENTIFICATION BY MASS SPECTROMETRY [LARGE SCALE ANALYSIS]</scope>
    <source>
        <tissue>Liver</tissue>
    </source>
</reference>
<reference key="6">
    <citation type="journal article" date="2010" name="Cell">
        <title>A tissue-specific atlas of mouse protein phosphorylation and expression.</title>
        <authorList>
            <person name="Huttlin E.L."/>
            <person name="Jedrychowski M.P."/>
            <person name="Elias J.E."/>
            <person name="Goswami T."/>
            <person name="Rad R."/>
            <person name="Beausoleil S.A."/>
            <person name="Villen J."/>
            <person name="Haas W."/>
            <person name="Sowa M.E."/>
            <person name="Gygi S.P."/>
        </authorList>
    </citation>
    <scope>PHOSPHORYLATION [LARGE SCALE ANALYSIS] AT SER-703</scope>
    <scope>IDENTIFICATION BY MASS SPECTROMETRY [LARGE SCALE ANALYSIS]</scope>
    <source>
        <tissue>Kidney</tissue>
        <tissue>Lung</tissue>
        <tissue>Spleen</tissue>
        <tissue>Testis</tissue>
    </source>
</reference>
<comment type="function">
    <text>Acts as a transcriptional repressor. Involved in the early stages of mesenchymal stem cell (MSC) osteogenic differentiation. Is a regulator of podocyte gene expression during primary glomerula disease. Binds to promoter DNA.</text>
</comment>
<comment type="subunit">
    <text evidence="2">Homodimer (via homeobox domain 1). Heterodimer with ZHX1 (via homeobox domain 1). Heterodimer with ZHX2 (via homeobox domain 1). Heterodimerization with ZHX1 is a prerequisite for repressor activity. Interacts with NFYA.</text>
</comment>
<comment type="subcellular location">
    <subcellularLocation>
        <location evidence="2 4">Nucleus</location>
    </subcellularLocation>
</comment>
<comment type="tissue specificity">
    <text evidence="6">Ubiquitously expressed.</text>
</comment>
<comment type="similarity">
    <text evidence="3">Belongs to the ZHX family.</text>
</comment>
<keyword id="KW-0221">Differentiation</keyword>
<keyword id="KW-0238">DNA-binding</keyword>
<keyword id="KW-0371">Homeobox</keyword>
<keyword id="KW-0479">Metal-binding</keyword>
<keyword id="KW-0539">Nucleus</keyword>
<keyword id="KW-0597">Phosphoprotein</keyword>
<keyword id="KW-1185">Reference proteome</keyword>
<keyword id="KW-0677">Repeat</keyword>
<keyword id="KW-0678">Repressor</keyword>
<keyword id="KW-0804">Transcription</keyword>
<keyword id="KW-0805">Transcription regulation</keyword>
<keyword id="KW-0862">Zinc</keyword>
<keyword id="KW-0863">Zinc-finger</keyword>
<dbReference type="EMBL" id="AB099527">
    <property type="protein sequence ID" value="BAC87711.2"/>
    <property type="molecule type" value="mRNA"/>
</dbReference>
<dbReference type="EMBL" id="AB099703">
    <property type="protein sequence ID" value="BAC87741.2"/>
    <property type="molecule type" value="Genomic_DNA"/>
</dbReference>
<dbReference type="EMBL" id="AK030057">
    <property type="protein sequence ID" value="BAC26763.1"/>
    <property type="molecule type" value="mRNA"/>
</dbReference>
<dbReference type="EMBL" id="BC058111">
    <property type="protein sequence ID" value="AAH58111.1"/>
    <property type="molecule type" value="mRNA"/>
</dbReference>
<dbReference type="EMBL" id="AK122271">
    <property type="protein sequence ID" value="BAC65553.1"/>
    <property type="molecule type" value="mRNA"/>
</dbReference>
<dbReference type="CCDS" id="CCDS16997.1"/>
<dbReference type="RefSeq" id="NP_796237.2">
    <property type="nucleotide sequence ID" value="NM_177263.3"/>
</dbReference>
<dbReference type="SMR" id="Q8C0Q2"/>
<dbReference type="FunCoup" id="Q8C0Q2">
    <property type="interactions" value="1631"/>
</dbReference>
<dbReference type="STRING" id="10090.ENSMUSP00000099400"/>
<dbReference type="iPTMnet" id="Q8C0Q2"/>
<dbReference type="PhosphoSitePlus" id="Q8C0Q2"/>
<dbReference type="PaxDb" id="10090-ENSMUSP00000099400"/>
<dbReference type="ProteomicsDB" id="275370"/>
<dbReference type="Pumba" id="Q8C0Q2"/>
<dbReference type="Antibodypedia" id="1834">
    <property type="antibodies" value="159 antibodies from 22 providers"/>
</dbReference>
<dbReference type="DNASU" id="320799"/>
<dbReference type="Ensembl" id="ENSMUST00000103111.9">
    <property type="protein sequence ID" value="ENSMUSP00000099400.3"/>
    <property type="gene ID" value="ENSMUSG00000035877.18"/>
</dbReference>
<dbReference type="Ensembl" id="ENSMUST00000103112.8">
    <property type="protein sequence ID" value="ENSMUSP00000099401.2"/>
    <property type="gene ID" value="ENSMUSG00000035877.18"/>
</dbReference>
<dbReference type="Ensembl" id="ENSMUST00000109460.8">
    <property type="protein sequence ID" value="ENSMUSP00000105086.2"/>
    <property type="gene ID" value="ENSMUSG00000035877.18"/>
</dbReference>
<dbReference type="GeneID" id="320799"/>
<dbReference type="KEGG" id="mmu:320799"/>
<dbReference type="UCSC" id="uc008nre.1">
    <property type="organism name" value="mouse"/>
</dbReference>
<dbReference type="AGR" id="MGI:2444772"/>
<dbReference type="CTD" id="23051"/>
<dbReference type="MGI" id="MGI:2444772">
    <property type="gene designation" value="Zhx3"/>
</dbReference>
<dbReference type="VEuPathDB" id="HostDB:ENSMUSG00000035877"/>
<dbReference type="eggNOG" id="ENOG502RC6G">
    <property type="taxonomic scope" value="Eukaryota"/>
</dbReference>
<dbReference type="GeneTree" id="ENSGT00950000182893"/>
<dbReference type="HOGENOM" id="CLU_009147_1_0_1"/>
<dbReference type="InParanoid" id="Q8C0Q2"/>
<dbReference type="OMA" id="ACEPEDD"/>
<dbReference type="OrthoDB" id="9934076at2759"/>
<dbReference type="PhylomeDB" id="Q8C0Q2"/>
<dbReference type="TreeFam" id="TF333363"/>
<dbReference type="BioGRID-ORCS" id="320799">
    <property type="hits" value="2 hits in 78 CRISPR screens"/>
</dbReference>
<dbReference type="ChiTaRS" id="Zhx3">
    <property type="organism name" value="mouse"/>
</dbReference>
<dbReference type="PRO" id="PR:Q8C0Q2"/>
<dbReference type="Proteomes" id="UP000000589">
    <property type="component" value="Chromosome 2"/>
</dbReference>
<dbReference type="RNAct" id="Q8C0Q2">
    <property type="molecule type" value="protein"/>
</dbReference>
<dbReference type="Bgee" id="ENSMUSG00000035877">
    <property type="expression patterns" value="Expressed in otolith organ and 220 other cell types or tissues"/>
</dbReference>
<dbReference type="ExpressionAtlas" id="Q8C0Q2">
    <property type="expression patterns" value="baseline and differential"/>
</dbReference>
<dbReference type="GO" id="GO:0005938">
    <property type="term" value="C:cell cortex"/>
    <property type="evidence" value="ECO:0000266"/>
    <property type="project" value="MGI"/>
</dbReference>
<dbReference type="GO" id="GO:0005654">
    <property type="term" value="C:nucleoplasm"/>
    <property type="evidence" value="ECO:0007669"/>
    <property type="project" value="Ensembl"/>
</dbReference>
<dbReference type="GO" id="GO:0005634">
    <property type="term" value="C:nucleus"/>
    <property type="evidence" value="ECO:0000314"/>
    <property type="project" value="GO_Central"/>
</dbReference>
<dbReference type="GO" id="GO:0003700">
    <property type="term" value="F:DNA-binding transcription factor activity"/>
    <property type="evidence" value="ECO:0000250"/>
    <property type="project" value="UniProtKB"/>
</dbReference>
<dbReference type="GO" id="GO:0000981">
    <property type="term" value="F:DNA-binding transcription factor activity, RNA polymerase II-specific"/>
    <property type="evidence" value="ECO:0007669"/>
    <property type="project" value="Ensembl"/>
</dbReference>
<dbReference type="GO" id="GO:0046982">
    <property type="term" value="F:protein heterodimerization activity"/>
    <property type="evidence" value="ECO:0000250"/>
    <property type="project" value="UniProtKB"/>
</dbReference>
<dbReference type="GO" id="GO:0042803">
    <property type="term" value="F:protein homodimerization activity"/>
    <property type="evidence" value="ECO:0000250"/>
    <property type="project" value="UniProtKB"/>
</dbReference>
<dbReference type="GO" id="GO:0000977">
    <property type="term" value="F:RNA polymerase II transcription regulatory region sequence-specific DNA binding"/>
    <property type="evidence" value="ECO:0007669"/>
    <property type="project" value="Ensembl"/>
</dbReference>
<dbReference type="GO" id="GO:0008270">
    <property type="term" value="F:zinc ion binding"/>
    <property type="evidence" value="ECO:0007669"/>
    <property type="project" value="UniProtKB-KW"/>
</dbReference>
<dbReference type="GO" id="GO:0030154">
    <property type="term" value="P:cell differentiation"/>
    <property type="evidence" value="ECO:0007669"/>
    <property type="project" value="UniProtKB-KW"/>
</dbReference>
<dbReference type="GO" id="GO:0045892">
    <property type="term" value="P:negative regulation of DNA-templated transcription"/>
    <property type="evidence" value="ECO:0000250"/>
    <property type="project" value="UniProtKB"/>
</dbReference>
<dbReference type="GO" id="GO:0000122">
    <property type="term" value="P:negative regulation of transcription by RNA polymerase II"/>
    <property type="evidence" value="ECO:0007669"/>
    <property type="project" value="Ensembl"/>
</dbReference>
<dbReference type="GO" id="GO:0045669">
    <property type="term" value="P:positive regulation of osteoblast differentiation"/>
    <property type="evidence" value="ECO:0000250"/>
    <property type="project" value="UniProtKB"/>
</dbReference>
<dbReference type="CDD" id="cd00086">
    <property type="entry name" value="homeodomain"/>
    <property type="match status" value="5"/>
</dbReference>
<dbReference type="FunFam" id="1.10.10.60:FF:000194">
    <property type="entry name" value="Zinc fingers and homeoboxes protein 3"/>
    <property type="match status" value="1"/>
</dbReference>
<dbReference type="FunFam" id="1.10.10.60:FF:000208">
    <property type="entry name" value="Zinc fingers and homeoboxes protein 3"/>
    <property type="match status" value="1"/>
</dbReference>
<dbReference type="FunFam" id="1.10.10.60:FF:000212">
    <property type="entry name" value="Zinc fingers and homeoboxes protein 3"/>
    <property type="match status" value="1"/>
</dbReference>
<dbReference type="FunFam" id="3.30.160.60:FF:000864">
    <property type="entry name" value="Zinc fingers and homeoboxes protein 3"/>
    <property type="match status" value="1"/>
</dbReference>
<dbReference type="FunFam" id="1.10.10.60:FF:000062">
    <property type="entry name" value="zinc fingers and homeoboxes protein 3"/>
    <property type="match status" value="1"/>
</dbReference>
<dbReference type="FunFam" id="1.10.10.60:FF:000133">
    <property type="entry name" value="zinc fingers and homeoboxes protein 3"/>
    <property type="match status" value="1"/>
</dbReference>
<dbReference type="Gene3D" id="3.30.160.60">
    <property type="entry name" value="Classic Zinc Finger"/>
    <property type="match status" value="1"/>
</dbReference>
<dbReference type="Gene3D" id="1.10.10.60">
    <property type="entry name" value="Homeodomain-like"/>
    <property type="match status" value="5"/>
</dbReference>
<dbReference type="InterPro" id="IPR001356">
    <property type="entry name" value="HD"/>
</dbReference>
<dbReference type="InterPro" id="IPR009057">
    <property type="entry name" value="Homeodomain-like_sf"/>
</dbReference>
<dbReference type="InterPro" id="IPR024578">
    <property type="entry name" value="Homez_homeobox_dom"/>
</dbReference>
<dbReference type="InterPro" id="IPR041057">
    <property type="entry name" value="ZHX_Znf_C2H2"/>
</dbReference>
<dbReference type="InterPro" id="IPR036236">
    <property type="entry name" value="Znf_C2H2_sf"/>
</dbReference>
<dbReference type="InterPro" id="IPR013087">
    <property type="entry name" value="Znf_C2H2_type"/>
</dbReference>
<dbReference type="PANTHER" id="PTHR15467:SF6">
    <property type="entry name" value="ZINC FINGERS AND HOMEOBOXES PROTEIN 3"/>
    <property type="match status" value="1"/>
</dbReference>
<dbReference type="PANTHER" id="PTHR15467">
    <property type="entry name" value="ZINC-FINGERS AND HOMEOBOXES RELATED"/>
    <property type="match status" value="1"/>
</dbReference>
<dbReference type="Pfam" id="PF00046">
    <property type="entry name" value="Homeodomain"/>
    <property type="match status" value="3"/>
</dbReference>
<dbReference type="Pfam" id="PF11569">
    <property type="entry name" value="Homez"/>
    <property type="match status" value="1"/>
</dbReference>
<dbReference type="Pfam" id="PF18387">
    <property type="entry name" value="zf_C2H2_ZHX"/>
    <property type="match status" value="1"/>
</dbReference>
<dbReference type="SMART" id="SM00389">
    <property type="entry name" value="HOX"/>
    <property type="match status" value="4"/>
</dbReference>
<dbReference type="SMART" id="SM00355">
    <property type="entry name" value="ZnF_C2H2"/>
    <property type="match status" value="2"/>
</dbReference>
<dbReference type="SUPFAM" id="SSF57667">
    <property type="entry name" value="beta-beta-alpha zinc fingers"/>
    <property type="match status" value="1"/>
</dbReference>
<dbReference type="SUPFAM" id="SSF46689">
    <property type="entry name" value="Homeodomain-like"/>
    <property type="match status" value="5"/>
</dbReference>
<dbReference type="PROSITE" id="PS50071">
    <property type="entry name" value="HOMEOBOX_2"/>
    <property type="match status" value="4"/>
</dbReference>
<protein>
    <recommendedName>
        <fullName>Zinc fingers and homeoboxes protein 3</fullName>
    </recommendedName>
    <alternativeName>
        <fullName>Triple homeobox protein 1</fullName>
    </alternativeName>
    <alternativeName>
        <fullName>Zinc finger and homeodomain protein 3</fullName>
    </alternativeName>
</protein>
<name>ZHX3_MOUSE</name>